<reference key="1">
    <citation type="journal article" date="2002" name="Nucleic Acids Res.">
        <title>Genome sequence of Oceanobacillus iheyensis isolated from the Iheya Ridge and its unexpected adaptive capabilities to extreme environments.</title>
        <authorList>
            <person name="Takami H."/>
            <person name="Takaki Y."/>
            <person name="Uchiyama I."/>
        </authorList>
    </citation>
    <scope>NUCLEOTIDE SEQUENCE [LARGE SCALE GENOMIC DNA]</scope>
    <source>
        <strain>DSM 14371 / CIP 107618 / JCM 11309 / KCTC 3954 / HTE831</strain>
    </source>
</reference>
<dbReference type="EC" id="7.5.2.7" evidence="1"/>
<dbReference type="EMBL" id="BA000028">
    <property type="protein sequence ID" value="BAC14530.1"/>
    <property type="molecule type" value="Genomic_DNA"/>
</dbReference>
<dbReference type="RefSeq" id="WP_011066967.1">
    <property type="nucleotide sequence ID" value="NC_004193.1"/>
</dbReference>
<dbReference type="SMR" id="Q8ENB3"/>
<dbReference type="STRING" id="221109.gene:10734826"/>
<dbReference type="KEGG" id="oih:OB2574"/>
<dbReference type="eggNOG" id="COG1129">
    <property type="taxonomic scope" value="Bacteria"/>
</dbReference>
<dbReference type="HOGENOM" id="CLU_000604_92_3_9"/>
<dbReference type="OrthoDB" id="9771863at2"/>
<dbReference type="PhylomeDB" id="Q8ENB3"/>
<dbReference type="Proteomes" id="UP000000822">
    <property type="component" value="Chromosome"/>
</dbReference>
<dbReference type="GO" id="GO:0005886">
    <property type="term" value="C:plasma membrane"/>
    <property type="evidence" value="ECO:0007669"/>
    <property type="project" value="UniProtKB-SubCell"/>
</dbReference>
<dbReference type="GO" id="GO:0015611">
    <property type="term" value="F:ABC-type D-ribose transporter activity"/>
    <property type="evidence" value="ECO:0007669"/>
    <property type="project" value="UniProtKB-EC"/>
</dbReference>
<dbReference type="GO" id="GO:0005524">
    <property type="term" value="F:ATP binding"/>
    <property type="evidence" value="ECO:0007669"/>
    <property type="project" value="UniProtKB-KW"/>
</dbReference>
<dbReference type="GO" id="GO:0016887">
    <property type="term" value="F:ATP hydrolysis activity"/>
    <property type="evidence" value="ECO:0007669"/>
    <property type="project" value="InterPro"/>
</dbReference>
<dbReference type="CDD" id="cd03216">
    <property type="entry name" value="ABC_Carb_Monos_I"/>
    <property type="match status" value="1"/>
</dbReference>
<dbReference type="CDD" id="cd03215">
    <property type="entry name" value="ABC_Carb_Monos_II"/>
    <property type="match status" value="1"/>
</dbReference>
<dbReference type="FunFam" id="3.40.50.300:FF:000126">
    <property type="entry name" value="Galactose/methyl galactoside import ATP-binding protein MglA"/>
    <property type="match status" value="1"/>
</dbReference>
<dbReference type="FunFam" id="3.40.50.300:FF:000127">
    <property type="entry name" value="Ribose import ATP-binding protein RbsA"/>
    <property type="match status" value="1"/>
</dbReference>
<dbReference type="Gene3D" id="3.40.50.300">
    <property type="entry name" value="P-loop containing nucleotide triphosphate hydrolases"/>
    <property type="match status" value="2"/>
</dbReference>
<dbReference type="InterPro" id="IPR003593">
    <property type="entry name" value="AAA+_ATPase"/>
</dbReference>
<dbReference type="InterPro" id="IPR050107">
    <property type="entry name" value="ABC_carbohydrate_import_ATPase"/>
</dbReference>
<dbReference type="InterPro" id="IPR003439">
    <property type="entry name" value="ABC_transporter-like_ATP-bd"/>
</dbReference>
<dbReference type="InterPro" id="IPR017871">
    <property type="entry name" value="ABC_transporter-like_CS"/>
</dbReference>
<dbReference type="InterPro" id="IPR027417">
    <property type="entry name" value="P-loop_NTPase"/>
</dbReference>
<dbReference type="PANTHER" id="PTHR43790">
    <property type="entry name" value="CARBOHYDRATE TRANSPORT ATP-BINDING PROTEIN MG119-RELATED"/>
    <property type="match status" value="1"/>
</dbReference>
<dbReference type="PANTHER" id="PTHR43790:SF3">
    <property type="entry name" value="D-ALLOSE IMPORT ATP-BINDING PROTEIN ALSA-RELATED"/>
    <property type="match status" value="1"/>
</dbReference>
<dbReference type="Pfam" id="PF00005">
    <property type="entry name" value="ABC_tran"/>
    <property type="match status" value="2"/>
</dbReference>
<dbReference type="SMART" id="SM00382">
    <property type="entry name" value="AAA"/>
    <property type="match status" value="2"/>
</dbReference>
<dbReference type="SUPFAM" id="SSF52540">
    <property type="entry name" value="P-loop containing nucleoside triphosphate hydrolases"/>
    <property type="match status" value="2"/>
</dbReference>
<dbReference type="PROSITE" id="PS00211">
    <property type="entry name" value="ABC_TRANSPORTER_1"/>
    <property type="match status" value="2"/>
</dbReference>
<dbReference type="PROSITE" id="PS50893">
    <property type="entry name" value="ABC_TRANSPORTER_2"/>
    <property type="match status" value="2"/>
</dbReference>
<dbReference type="PROSITE" id="PS51254">
    <property type="entry name" value="RBSA"/>
    <property type="match status" value="1"/>
</dbReference>
<keyword id="KW-0067">ATP-binding</keyword>
<keyword id="KW-1003">Cell membrane</keyword>
<keyword id="KW-0472">Membrane</keyword>
<keyword id="KW-0547">Nucleotide-binding</keyword>
<keyword id="KW-1185">Reference proteome</keyword>
<keyword id="KW-0677">Repeat</keyword>
<keyword id="KW-0762">Sugar transport</keyword>
<keyword id="KW-1278">Translocase</keyword>
<keyword id="KW-0813">Transport</keyword>
<gene>
    <name evidence="1" type="primary">rbsA</name>
    <name type="ordered locus">OB2574</name>
</gene>
<protein>
    <recommendedName>
        <fullName evidence="1">Ribose import ATP-binding protein RbsA</fullName>
        <ecNumber evidence="1">7.5.2.7</ecNumber>
    </recommendedName>
</protein>
<comment type="function">
    <text evidence="1">Part of the ABC transporter complex RbsABC involved in ribose import. Responsible for energy coupling to the transport system.</text>
</comment>
<comment type="catalytic activity">
    <reaction evidence="1">
        <text>D-ribose(out) + ATP + H2O = D-ribose(in) + ADP + phosphate + H(+)</text>
        <dbReference type="Rhea" id="RHEA:29903"/>
        <dbReference type="ChEBI" id="CHEBI:15377"/>
        <dbReference type="ChEBI" id="CHEBI:15378"/>
        <dbReference type="ChEBI" id="CHEBI:30616"/>
        <dbReference type="ChEBI" id="CHEBI:43474"/>
        <dbReference type="ChEBI" id="CHEBI:47013"/>
        <dbReference type="ChEBI" id="CHEBI:456216"/>
        <dbReference type="EC" id="7.5.2.7"/>
    </reaction>
</comment>
<comment type="subunit">
    <text evidence="1">The complex is composed of an ATP-binding protein (RbsA), two transmembrane proteins (RbsC) and a solute-binding protein (RbsB).</text>
</comment>
<comment type="subcellular location">
    <subcellularLocation>
        <location evidence="1">Cell membrane</location>
        <topology evidence="1">Peripheral membrane protein</topology>
    </subcellularLocation>
</comment>
<comment type="similarity">
    <text evidence="1">Belongs to the ABC transporter superfamily. Ribose importer (TC 3.A.1.2.1) family.</text>
</comment>
<name>RBSA_OCEIH</name>
<sequence length="496" mass="55441">MKIVMENIHKSFGSNNVLEGVDFSLEPGEIHALMGENGAGKSTLMNILTGLFPSNQGSITIDGVKTQYKDSKESEQAGIAFIRQELNILPQMTVLENLFIGKEMTNSFGFLREKVMKEKAEEVFSRLDFSIPFDKEAGECSVGEQQLIEIAKALMLDAKIIIMDEPTAALTDREIDKLFEIMKELTQQGVALVYISHRMEEIFAICDRITVMRDGISVKTSWIKDTNYNEIVKQMVGRELDERYPERTPTFGKPVLQVNNFSRKGYFNDIKFSVREGEILGVSGLMGAGRTEIMRAIFGIDEVDQGEILLDGKKLTIKDPTDAMKAGLAFITENRKDEGLVLDFSIRENIGLSNLNSFSNKGFIKGKDEKDFVELMIKRLQIKTQTQELPVGNLSGGNQQKVVIAKWVGTSPRVLIMDEPTRGIDVGAKREIYQLMNELTERGLAIIMISSDLPEVLGMSDRIMVIHEGEISGELVREEATQEKIMTYATGGNGHE</sequence>
<evidence type="ECO:0000255" key="1">
    <source>
        <dbReference type="HAMAP-Rule" id="MF_01716"/>
    </source>
</evidence>
<feature type="chain" id="PRO_0000261074" description="Ribose import ATP-binding protein RbsA">
    <location>
        <begin position="1"/>
        <end position="496"/>
    </location>
</feature>
<feature type="domain" description="ABC transporter 1" evidence="1">
    <location>
        <begin position="3"/>
        <end position="239"/>
    </location>
</feature>
<feature type="domain" description="ABC transporter 2" evidence="1">
    <location>
        <begin position="246"/>
        <end position="493"/>
    </location>
</feature>
<feature type="binding site" evidence="1">
    <location>
        <begin position="35"/>
        <end position="42"/>
    </location>
    <ligand>
        <name>ATP</name>
        <dbReference type="ChEBI" id="CHEBI:30616"/>
    </ligand>
</feature>
<accession>Q8ENB3</accession>
<proteinExistence type="inferred from homology"/>
<organism>
    <name type="scientific">Oceanobacillus iheyensis (strain DSM 14371 / CIP 107618 / JCM 11309 / KCTC 3954 / HTE831)</name>
    <dbReference type="NCBI Taxonomy" id="221109"/>
    <lineage>
        <taxon>Bacteria</taxon>
        <taxon>Bacillati</taxon>
        <taxon>Bacillota</taxon>
        <taxon>Bacilli</taxon>
        <taxon>Bacillales</taxon>
        <taxon>Bacillaceae</taxon>
        <taxon>Oceanobacillus</taxon>
    </lineage>
</organism>